<sequence length="479" mass="54022">MDETSPLVSPERAQPPDYTFPSGSGAHFPQVPGGAVRVAAAAGSGPSPPGSPGHDRERQPLLDRARGAAAQGQTQTVAAQAQALAAQAAAAAHAAQAHRERNEFPEDPEFEAVVRQAELAIERCIFPERIYQGSSGSYFVKDPQGRIIAVFKPKNEEPYGHLNPKWTKWLQKLCCPCCFGRDCLVLNQGYLSEAGASLVDQKLELNIVPRTKVVYLASETFNYSAIDRVKSRGKRLALEKVPKVGQRFNRIGLPPKVGSFQLFVEGYKDADYWLRRFEAEPLPENTNRQLLLQFERLVVLDYIIRNTDRGNDNWLIKYDCPMDSSSSRDTDWVVVKEPVIKVAAIDNGLAFPLKHPDSWRAYPFYWAWLPQAKVPFSQEIKDLILPKISDPNFVKDLEEDLYELFKKDPGFDRGQFHKQIAVMRGQILNLTQALKDNKSPLHLVQMPPVIVETARSHQRSSSESYTQSFQSRKPFFSWW</sequence>
<accession>Q9BTU6</accession>
<accession>D3DR59</accession>
<accession>Q9NSG8</accession>
<comment type="function">
    <text evidence="5 7 8 11 12 13 18">Membrane-bound phosphatidylinositol-4 kinase (PI4-kinase) that catalyzes the phosphorylation of phosphatidylinositol (PI) to phosphatidylinositol 4-phosphate (PI4P), a lipid that plays important roles in endocytosis, Golgi function, protein sorting and membrane trafficking and is required for prolonged survival of neurons. Besides, phosphorylation of phosphatidylinositol (PI) to phosphatidylinositol 4-phosphate (PI4P) is the first committed step in the generation of phosphatidylinositol 4,5-bisphosphate (PIP2), a precursor of the second messenger inositol 1,4,5-trisphosphate (InsP3).</text>
</comment>
<comment type="catalytic activity">
    <reaction evidence="5 6 8 12 13">
        <text>a 1,2-diacyl-sn-glycero-3-phospho-(1D-myo-inositol) + ATP = a 1,2-diacyl-sn-glycero-3-phospho-(1D-myo-inositol 4-phosphate) + ADP + H(+)</text>
        <dbReference type="Rhea" id="RHEA:19877"/>
        <dbReference type="ChEBI" id="CHEBI:15378"/>
        <dbReference type="ChEBI" id="CHEBI:30616"/>
        <dbReference type="ChEBI" id="CHEBI:57880"/>
        <dbReference type="ChEBI" id="CHEBI:58178"/>
        <dbReference type="ChEBI" id="CHEBI:456216"/>
        <dbReference type="EC" id="2.7.1.67"/>
    </reaction>
</comment>
<comment type="subunit">
    <text evidence="1 9 11 15">Associates with the BLOC-1 and the AP-3 complexes; the BLOC-1 complex is required for optimal binding of PI4K2A to the AP-3 complex. Interacts with BLOC1S5 and DTNBP1 (PubMed:21998198). Interacts with FOS; this interaction may enhance phosphatidylinositol phosphorylation activity (By similarity). Interacts with ITCH (PubMed:23146885). Interacts with ATG9A (PubMed:30917996).</text>
</comment>
<comment type="interaction">
    <interactant intactId="EBI-3239392">
        <id>Q9BTU6</id>
    </interactant>
    <interactant intactId="EBI-1564678">
        <id>Q96J02</id>
        <label>ITCH</label>
    </interactant>
    <organismsDiffer>false</organismsDiffer>
    <experiments>5</experiments>
</comment>
<comment type="subcellular location">
    <subcellularLocation>
        <location evidence="6 7 10">Golgi apparatus</location>
        <location evidence="6 7 10">trans-Golgi network membrane</location>
        <topology evidence="10">Lipid-anchor</topology>
    </subcellularLocation>
    <subcellularLocation>
        <location evidence="5">Membrane raft</location>
    </subcellularLocation>
    <subcellularLocation>
        <location evidence="1">Cell projection</location>
        <location evidence="1">Dendrite</location>
    </subcellularLocation>
    <subcellularLocation>
        <location evidence="1">Presynaptic cell membrane</location>
    </subcellularLocation>
    <subcellularLocation>
        <location evidence="1">Synapse</location>
        <location evidence="1">Synaptosome</location>
    </subcellularLocation>
    <subcellularLocation>
        <location evidence="1">Mitochondrion</location>
    </subcellularLocation>
    <subcellularLocation>
        <location evidence="7 11">Endosome</location>
    </subcellularLocation>
    <subcellularLocation>
        <location evidence="17">Endosome membrane</location>
    </subcellularLocation>
    <subcellularLocation>
        <location evidence="7">Cytoplasmic vesicle</location>
    </subcellularLocation>
    <subcellularLocation>
        <location evidence="12">Membrane</location>
        <topology evidence="12">Lipid-anchor</topology>
    </subcellularLocation>
    <subcellularLocation>
        <location evidence="5 7">Cell membrane</location>
    </subcellularLocation>
    <subcellularLocation>
        <location evidence="1">Perikaryon</location>
    </subcellularLocation>
    <subcellularLocation>
        <location evidence="1">Cell projection</location>
        <location evidence="1">Neuron projection</location>
    </subcellularLocation>
    <text evidence="1">Found in subdomains of the plasma membrane termed non-caveolar membrane rafts. Transported from neuronal cell body to neuron projections and neurite tips in a BLOC-1- and AP-3-complexes-dependent manner.</text>
</comment>
<comment type="tissue specificity">
    <text evidence="5">Widely expressed. Highest expression is observed in kidney, brain, heart, skeletal muscle, and placenta and lowest expression is observed in colon, thymus, and small intestine.</text>
</comment>
<comment type="PTM">
    <text evidence="10">Palmitoylated by ZDHHC3 and ZDHHC7 in the CCPCC motif. Palmitoylation is cholesterol-dependent, and required for TGN localization.</text>
</comment>
<comment type="PTM">
    <text evidence="11">Ubiquitinated by ITCH; this does not lead to proteasomal degradation.</text>
</comment>
<comment type="disease" evidence="14 17">
    <disease id="DI-06859">
        <name>Neurodevelopmental disorder with hyperkinetic movements, seizures, and structural brain abnormalities</name>
        <acronym>NEDMSB</acronym>
        <description>An autosomal recessive disorder characterized by failure to thrive, global developmental delay with intellectual disability and absent speech, seizures, hypotonia, inability to walk, orofacial dyskinesia, involuntary movements, and structural brain abnormalities.</description>
        <dbReference type="MIM" id="620732"/>
    </disease>
    <text>The disease is caused by variants affecting the gene represented in this entry.</text>
</comment>
<comment type="similarity">
    <text evidence="18">Belongs to the PI3/PI4-kinase family. Type II PI4K subfamily.</text>
</comment>
<gene>
    <name type="primary">PI4K2A</name>
</gene>
<organism>
    <name type="scientific">Homo sapiens</name>
    <name type="common">Human</name>
    <dbReference type="NCBI Taxonomy" id="9606"/>
    <lineage>
        <taxon>Eukaryota</taxon>
        <taxon>Metazoa</taxon>
        <taxon>Chordata</taxon>
        <taxon>Craniata</taxon>
        <taxon>Vertebrata</taxon>
        <taxon>Euteleostomi</taxon>
        <taxon>Mammalia</taxon>
        <taxon>Eutheria</taxon>
        <taxon>Euarchontoglires</taxon>
        <taxon>Primates</taxon>
        <taxon>Haplorrhini</taxon>
        <taxon>Catarrhini</taxon>
        <taxon>Hominidae</taxon>
        <taxon>Homo</taxon>
    </lineage>
</organism>
<feature type="chain" id="PRO_0000285158" description="Phosphatidylinositol 4-kinase type 2-alpha">
    <location>
        <begin position="1"/>
        <end position="479"/>
    </location>
</feature>
<feature type="domain" description="PI3K/PI4K catalytic" evidence="3">
    <location>
        <begin position="124"/>
        <end position="453"/>
    </location>
</feature>
<feature type="region of interest" description="Disordered" evidence="4">
    <location>
        <begin position="1"/>
        <end position="74"/>
    </location>
</feature>
<feature type="region of interest" description="G-loop" evidence="3">
    <location>
        <begin position="130"/>
        <end position="136"/>
    </location>
</feature>
<feature type="region of interest" description="Important for substrate binding" evidence="20">
    <location>
        <begin position="157"/>
        <end position="159"/>
    </location>
</feature>
<feature type="region of interest" description="Important for interaction with membranes" evidence="20 21">
    <location>
        <begin position="165"/>
        <end position="178"/>
    </location>
</feature>
<feature type="region of interest" description="Important for interaction with membranes" evidence="20">
    <location>
        <begin position="268"/>
        <end position="276"/>
    </location>
</feature>
<feature type="region of interest" description="Catalytic loop" evidence="3">
    <location>
        <begin position="305"/>
        <end position="313"/>
    </location>
</feature>
<feature type="region of interest" description="Activation loop" evidence="3">
    <location>
        <begin position="344"/>
        <end position="364"/>
    </location>
</feature>
<feature type="region of interest" description="Important for interaction with membranes" evidence="20">
    <location>
        <begin position="359"/>
        <end position="368"/>
    </location>
</feature>
<feature type="compositionally biased region" description="Low complexity" evidence="4">
    <location>
        <begin position="31"/>
        <end position="45"/>
    </location>
</feature>
<feature type="compositionally biased region" description="Basic and acidic residues" evidence="4">
    <location>
        <begin position="53"/>
        <end position="66"/>
    </location>
</feature>
<feature type="binding site" evidence="12 13">
    <location>
        <begin position="131"/>
        <end position="137"/>
    </location>
    <ligand>
        <name>ATP</name>
        <dbReference type="ChEBI" id="CHEBI:30616"/>
    </ligand>
</feature>
<feature type="binding site" evidence="12 13">
    <location>
        <position position="152"/>
    </location>
    <ligand>
        <name>ATP</name>
        <dbReference type="ChEBI" id="CHEBI:30616"/>
    </ligand>
</feature>
<feature type="binding site" evidence="12 13">
    <location>
        <begin position="261"/>
        <end position="264"/>
    </location>
    <ligand>
        <name>ATP</name>
        <dbReference type="ChEBI" id="CHEBI:30616"/>
    </ligand>
</feature>
<feature type="binding site" evidence="12 13">
    <location>
        <position position="346"/>
    </location>
    <ligand>
        <name>ATP</name>
        <dbReference type="ChEBI" id="CHEBI:30616"/>
    </ligand>
</feature>
<feature type="modified residue" description="N-acetylmethionine" evidence="25 27 30">
    <location>
        <position position="1"/>
    </location>
</feature>
<feature type="modified residue" description="Phosphoserine" evidence="25 28">
    <location>
        <position position="5"/>
    </location>
</feature>
<feature type="modified residue" description="Phosphoserine" evidence="25 28">
    <location>
        <position position="9"/>
    </location>
</feature>
<feature type="modified residue" description="Phosphoserine" evidence="29">
    <location>
        <position position="44"/>
    </location>
</feature>
<feature type="modified residue" description="Phosphoserine" evidence="22 23 24 25 26 28 29">
    <location>
        <position position="47"/>
    </location>
</feature>
<feature type="modified residue" description="Phosphoserine" evidence="22 23 24 26 28 29">
    <location>
        <position position="51"/>
    </location>
</feature>
<feature type="modified residue" description="Phosphoserine" evidence="2">
    <location>
        <position position="462"/>
    </location>
</feature>
<feature type="lipid moiety-binding region" description="S-palmitoyl cysteine" evidence="19 20">
    <location>
        <position position="174"/>
    </location>
</feature>
<feature type="lipid moiety-binding region" description="S-palmitoyl cysteine" evidence="19 20">
    <location>
        <position position="175"/>
    </location>
</feature>
<feature type="lipid moiety-binding region" description="S-palmitoyl cysteine" evidence="19 20">
    <location>
        <position position="177"/>
    </location>
</feature>
<feature type="lipid moiety-binding region" description="S-palmitoyl cysteine" evidence="19 20">
    <location>
        <position position="178"/>
    </location>
</feature>
<feature type="sequence variant" id="VAR_089389" description="In NEDMSB; likely pathogenic." evidence="14">
    <location>
        <begin position="22"/>
        <end position="479"/>
    </location>
</feature>
<feature type="sequence variant" id="VAR_089390" description="Found in a patient with cutis laxa, a choreoathetoid movement disorder, dysmorphic features and intellectual disability; uncertain significance; reduced phosphatidylinositol 4-kinase activity in patient cells; similar to the wild type, it rescues low PI4P levels when transfected in PI4K2A-null cells suggesting no effect on function in PI4P synthesis; does not affect localization to intracellular membranes; dbSNP:rs200233778." evidence="16 17">
    <original>R</original>
    <variation>W</variation>
    <location>
        <position position="275"/>
    </location>
</feature>
<feature type="sequence variant" id="VAR_089391" description="In NEDMSB; likely pathogenic; fails to rescue low PI4P levels in PI4K2A-null cells suggesting loss of function in PI4P synthesis; contrary to the wild type, it has a cytosolic distribution showing no association with any intracellular membranes; does not localize to endosome membrane." evidence="17">
    <location>
        <begin position="309"/>
        <end position="479"/>
    </location>
</feature>
<feature type="mutagenesis site" description="Reduces enzyme activity, probably due to impaired membrane-association; when associated with E-275 and E-276." evidence="12">
    <original>R</original>
    <variation>E</variation>
    <location>
        <position position="129"/>
    </location>
</feature>
<feature type="mutagenesis site" description="Abolishes enzyme activity." evidence="12 13">
    <original>K</original>
    <variation>A</variation>
    <location>
        <position position="152"/>
    </location>
</feature>
<feature type="mutagenesis site" description="Abolishes enzyme activity." evidence="12">
    <original>EPY</original>
    <variation>APA</variation>
    <location>
        <begin position="157"/>
        <end position="159"/>
    </location>
</feature>
<feature type="mutagenesis site" description="Reduces enzyme activity." evidence="13">
    <original>N</original>
    <variation>A</variation>
    <location>
        <position position="163"/>
    </location>
</feature>
<feature type="mutagenesis site" description="Abolishes enzyme activity." evidence="13">
    <original>KWTKWLQK</original>
    <variation>AAAAAAAA</variation>
    <location>
        <begin position="165"/>
        <end position="172"/>
    </location>
</feature>
<feature type="mutagenesis site" description="Abolishes enzyme activity; when associated with A-168 and A-172." evidence="12">
    <original>K</original>
    <variation>A</variation>
    <location>
        <position position="165"/>
    </location>
</feature>
<feature type="mutagenesis site" description="Reduces enzyme activity." evidence="12">
    <original>W</original>
    <variation>A</variation>
    <location>
        <position position="166"/>
    </location>
</feature>
<feature type="mutagenesis site" description="Abolishes enzyme activity; when associated with A-165 and A-172." evidence="12">
    <original>K</original>
    <variation>A</variation>
    <location>
        <position position="168"/>
    </location>
</feature>
<feature type="mutagenesis site" description="Abolishes enzyme activity; when associated with A-165 and A-168." evidence="12">
    <original>K</original>
    <variation>A</variation>
    <location>
        <position position="172"/>
    </location>
</feature>
<feature type="mutagenesis site" description="No effect on membrane-association." evidence="12">
    <original>CCPCC</original>
    <variation>FFPFF</variation>
    <location>
        <begin position="174"/>
        <end position="178"/>
    </location>
</feature>
<feature type="mutagenesis site" description="Abolishes palmitoylation and impairs membrane-association." evidence="10 12">
    <original>CCPCC</original>
    <variation>SSPSS</variation>
    <location>
        <begin position="174"/>
        <end position="178"/>
    </location>
</feature>
<feature type="mutagenesis site" description="Abolishes enzyme activity; when associated with A-349." evidence="12">
    <original>L</original>
    <variation>A</variation>
    <location>
        <position position="184"/>
    </location>
</feature>
<feature type="mutagenesis site" description="Abolishes enzyme activity; when associated with A-345." evidence="12">
    <original>F</original>
    <variation>A</variation>
    <location>
        <position position="263"/>
    </location>
</feature>
<feature type="mutagenesis site" description="Reduces enzyme activity by half." evidence="12">
    <original>D</original>
    <variation>A</variation>
    <location>
        <position position="269"/>
    </location>
</feature>
<feature type="mutagenesis site" description="Reduces enzyme activity." evidence="13">
    <original>R</original>
    <variation>A</variation>
    <location>
        <position position="275"/>
    </location>
</feature>
<feature type="mutagenesis site" description="Reduces enzyme activity, probably due to impaired membrane-association; when associated with E-129 and E-276." evidence="12">
    <original>R</original>
    <variation>E</variation>
    <location>
        <position position="275"/>
    </location>
</feature>
<feature type="mutagenesis site" description="Reduces enzyme activity, probably due to impaired membrane-association; when associated with E-129 and E-275." evidence="12">
    <original>R</original>
    <variation>E</variation>
    <location>
        <position position="276"/>
    </location>
</feature>
<feature type="mutagenesis site" description="Abolishes enzyme activity." evidence="13">
    <original>D</original>
    <variation>A</variation>
    <location>
        <position position="308"/>
    </location>
</feature>
<feature type="mutagenesis site" description="Abolishes enzyme activity; when associated with A-263." evidence="12">
    <original>I</original>
    <variation>A</variation>
    <location>
        <position position="345"/>
    </location>
</feature>
<feature type="mutagenesis site" description="Abolishes enzyme activity; when associated with A-184." evidence="12">
    <original>L</original>
    <variation>A</variation>
    <location>
        <position position="349"/>
    </location>
</feature>
<feature type="mutagenesis site" description="Strongly reduced enzyme activity, probably due to impaired membrane-association. Abolishes enzyme activity; when associated with A-365 and A-368." evidence="12">
    <original>W</original>
    <variation>A</variation>
    <location>
        <position position="359"/>
    </location>
</feature>
<feature type="mutagenesis site" description="Reduces enzyme activity, probably due to impaired membrane-association. Abolishes enzyme activity; when associated with A-368 and A-359." evidence="12">
    <original>Y</original>
    <variation>A</variation>
    <location>
        <position position="365"/>
    </location>
</feature>
<feature type="mutagenesis site" description="Reduces enzyme activity, probably due to impaired membrane-association. Abolishes enzyme activity; when associated with A-359 and A-365." evidence="12">
    <original>W</original>
    <variation>A</variation>
    <location>
        <position position="368"/>
    </location>
</feature>
<feature type="mutagenesis site" description="Reduces enzyme activity." evidence="13">
    <original>Q</original>
    <variation>A</variation>
    <location>
        <position position="445"/>
    </location>
</feature>
<feature type="helix" evidence="31">
    <location>
        <begin position="78"/>
        <end position="93"/>
    </location>
</feature>
<feature type="helix" evidence="31">
    <location>
        <begin position="95"/>
        <end position="99"/>
    </location>
</feature>
<feature type="helix" evidence="34">
    <location>
        <begin position="108"/>
        <end position="122"/>
    </location>
</feature>
<feature type="strand" evidence="33">
    <location>
        <begin position="131"/>
        <end position="136"/>
    </location>
</feature>
<feature type="strand" evidence="34">
    <location>
        <begin position="138"/>
        <end position="141"/>
    </location>
</feature>
<feature type="strand" evidence="34">
    <location>
        <begin position="147"/>
        <end position="153"/>
    </location>
</feature>
<feature type="helix" evidence="34">
    <location>
        <begin position="154"/>
        <end position="156"/>
    </location>
</feature>
<feature type="turn" evidence="34">
    <location>
        <begin position="164"/>
        <end position="166"/>
    </location>
</feature>
<feature type="helix" evidence="34">
    <location>
        <begin position="167"/>
        <end position="171"/>
    </location>
</feature>
<feature type="helix" evidence="34">
    <location>
        <begin position="189"/>
        <end position="203"/>
    </location>
</feature>
<feature type="strand" evidence="34">
    <location>
        <begin position="211"/>
        <end position="216"/>
    </location>
</feature>
<feature type="helix" evidence="34">
    <location>
        <begin position="225"/>
        <end position="231"/>
    </location>
</feature>
<feature type="strand" evidence="31">
    <location>
        <begin position="235"/>
        <end position="237"/>
    </location>
</feature>
<feature type="strand" evidence="31">
    <location>
        <begin position="249"/>
        <end position="251"/>
    </location>
</feature>
<feature type="strand" evidence="34">
    <location>
        <begin position="256"/>
        <end position="262"/>
    </location>
</feature>
<feature type="strand" evidence="32">
    <location>
        <begin position="266"/>
        <end position="269"/>
    </location>
</feature>
<feature type="helix" evidence="34">
    <location>
        <begin position="270"/>
        <end position="279"/>
    </location>
</feature>
<feature type="helix" evidence="34">
    <location>
        <begin position="284"/>
        <end position="304"/>
    </location>
</feature>
<feature type="strand" evidence="34">
    <location>
        <begin position="313"/>
        <end position="318"/>
    </location>
</feature>
<feature type="strand" evidence="34">
    <location>
        <begin position="339"/>
        <end position="344"/>
    </location>
</feature>
<feature type="turn" evidence="34">
    <location>
        <begin position="359"/>
        <end position="361"/>
    </location>
</feature>
<feature type="helix" evidence="34">
    <location>
        <begin position="365"/>
        <end position="368"/>
    </location>
</feature>
<feature type="helix" evidence="34">
    <location>
        <begin position="370"/>
        <end position="373"/>
    </location>
</feature>
<feature type="helix" evidence="34">
    <location>
        <begin position="378"/>
        <end position="388"/>
    </location>
</feature>
<feature type="helix" evidence="34">
    <location>
        <begin position="391"/>
        <end position="405"/>
    </location>
</feature>
<feature type="helix" evidence="34">
    <location>
        <begin position="413"/>
        <end position="435"/>
    </location>
</feature>
<feature type="helix" evidence="34">
    <location>
        <begin position="440"/>
        <end position="444"/>
    </location>
</feature>
<evidence type="ECO:0000250" key="1">
    <source>
        <dbReference type="UniProtKB" id="Q2TBE6"/>
    </source>
</evidence>
<evidence type="ECO:0000250" key="2">
    <source>
        <dbReference type="UniProtKB" id="Q99M64"/>
    </source>
</evidence>
<evidence type="ECO:0000255" key="3">
    <source>
        <dbReference type="PROSITE-ProRule" id="PRU00269"/>
    </source>
</evidence>
<evidence type="ECO:0000256" key="4">
    <source>
        <dbReference type="SAM" id="MobiDB-lite"/>
    </source>
</evidence>
<evidence type="ECO:0000269" key="5">
    <source>
    </source>
</evidence>
<evidence type="ECO:0000269" key="6">
    <source>
    </source>
</evidence>
<evidence type="ECO:0000269" key="7">
    <source>
    </source>
</evidence>
<evidence type="ECO:0000269" key="8">
    <source>
    </source>
</evidence>
<evidence type="ECO:0000269" key="9">
    <source>
    </source>
</evidence>
<evidence type="ECO:0000269" key="10">
    <source>
    </source>
</evidence>
<evidence type="ECO:0000269" key="11">
    <source>
    </source>
</evidence>
<evidence type="ECO:0000269" key="12">
    <source>
    </source>
</evidence>
<evidence type="ECO:0000269" key="13">
    <source>
    </source>
</evidence>
<evidence type="ECO:0000269" key="14">
    <source>
    </source>
</evidence>
<evidence type="ECO:0000269" key="15">
    <source>
    </source>
</evidence>
<evidence type="ECO:0000269" key="16">
    <source>
    </source>
</evidence>
<evidence type="ECO:0000269" key="17">
    <source>
    </source>
</evidence>
<evidence type="ECO:0000305" key="18"/>
<evidence type="ECO:0000305" key="19">
    <source>
    </source>
</evidence>
<evidence type="ECO:0000305" key="20">
    <source>
    </source>
</evidence>
<evidence type="ECO:0000305" key="21">
    <source>
    </source>
</evidence>
<evidence type="ECO:0007744" key="22">
    <source>
    </source>
</evidence>
<evidence type="ECO:0007744" key="23">
    <source>
    </source>
</evidence>
<evidence type="ECO:0007744" key="24">
    <source>
    </source>
</evidence>
<evidence type="ECO:0007744" key="25">
    <source>
    </source>
</evidence>
<evidence type="ECO:0007744" key="26">
    <source>
    </source>
</evidence>
<evidence type="ECO:0007744" key="27">
    <source>
    </source>
</evidence>
<evidence type="ECO:0007744" key="28">
    <source>
    </source>
</evidence>
<evidence type="ECO:0007744" key="29">
    <source>
    </source>
</evidence>
<evidence type="ECO:0007744" key="30">
    <source>
    </source>
</evidence>
<evidence type="ECO:0007829" key="31">
    <source>
        <dbReference type="PDB" id="4HNE"/>
    </source>
</evidence>
<evidence type="ECO:0007829" key="32">
    <source>
        <dbReference type="PDB" id="4PLA"/>
    </source>
</evidence>
<evidence type="ECO:0007829" key="33">
    <source>
        <dbReference type="PDB" id="4YC4"/>
    </source>
</evidence>
<evidence type="ECO:0007829" key="34">
    <source>
        <dbReference type="PDB" id="5I0N"/>
    </source>
</evidence>
<keyword id="KW-0002">3D-structure</keyword>
<keyword id="KW-0007">Acetylation</keyword>
<keyword id="KW-0067">ATP-binding</keyword>
<keyword id="KW-1003">Cell membrane</keyword>
<keyword id="KW-0966">Cell projection</keyword>
<keyword id="KW-0968">Cytoplasmic vesicle</keyword>
<keyword id="KW-0225">Disease variant</keyword>
<keyword id="KW-0967">Endosome</keyword>
<keyword id="KW-0887">Epilepsy</keyword>
<keyword id="KW-0333">Golgi apparatus</keyword>
<keyword id="KW-0991">Intellectual disability</keyword>
<keyword id="KW-0418">Kinase</keyword>
<keyword id="KW-0443">Lipid metabolism</keyword>
<keyword id="KW-0449">Lipoprotein</keyword>
<keyword id="KW-0472">Membrane</keyword>
<keyword id="KW-0496">Mitochondrion</keyword>
<keyword id="KW-0547">Nucleotide-binding</keyword>
<keyword id="KW-0564">Palmitate</keyword>
<keyword id="KW-0597">Phosphoprotein</keyword>
<keyword id="KW-1267">Proteomics identification</keyword>
<keyword id="KW-1185">Reference proteome</keyword>
<keyword id="KW-0770">Synapse</keyword>
<keyword id="KW-0771">Synaptosome</keyword>
<keyword id="KW-0808">Transferase</keyword>
<keyword id="KW-0832">Ubl conjugation</keyword>
<proteinExistence type="evidence at protein level"/>
<reference key="1">
    <citation type="journal article" date="2001" name="J. Biol. Chem.">
        <title>Cloning of a human type II phosphatidylinositol 4-kinase reveals a novel lipid kinase family.</title>
        <authorList>
            <person name="Minogue S."/>
            <person name="Anderson J.S."/>
            <person name="Waugh M.G."/>
            <person name="dos Santos M."/>
            <person name="Corless S."/>
            <person name="Cramer R."/>
            <person name="Hsuan J.J."/>
        </authorList>
    </citation>
    <scope>NUCLEOTIDE SEQUENCE [MRNA]</scope>
    <scope>TISSUE SPECIFICITY</scope>
    <scope>SUBCELLULAR LOCATION</scope>
    <scope>IDENTIFICATION BY MASS SPECTROMETRY</scope>
    <scope>CATALYTIC ACTIVITY</scope>
    <scope>FUNCTION</scope>
</reference>
<reference key="2">
    <citation type="submission" date="2003-05" db="EMBL/GenBank/DDBJ databases">
        <title>Cloning of human full-length CDSs in BD Creator(TM) system donor vector.</title>
        <authorList>
            <person name="Kalnine N."/>
            <person name="Chen X."/>
            <person name="Rolfs A."/>
            <person name="Halleck A."/>
            <person name="Hines L."/>
            <person name="Eisenstein S."/>
            <person name="Koundinya M."/>
            <person name="Raphael J."/>
            <person name="Moreira D."/>
            <person name="Kelley T."/>
            <person name="LaBaer J."/>
            <person name="Lin Y."/>
            <person name="Phelan M."/>
            <person name="Farmer A."/>
        </authorList>
    </citation>
    <scope>NUCLEOTIDE SEQUENCE [LARGE SCALE MRNA]</scope>
</reference>
<reference key="3">
    <citation type="journal article" date="2004" name="Nature">
        <title>The DNA sequence and comparative analysis of human chromosome 10.</title>
        <authorList>
            <person name="Deloukas P."/>
            <person name="Earthrowl M.E."/>
            <person name="Grafham D.V."/>
            <person name="Rubenfield M."/>
            <person name="French L."/>
            <person name="Steward C.A."/>
            <person name="Sims S.K."/>
            <person name="Jones M.C."/>
            <person name="Searle S."/>
            <person name="Scott C."/>
            <person name="Howe K."/>
            <person name="Hunt S.E."/>
            <person name="Andrews T.D."/>
            <person name="Gilbert J.G.R."/>
            <person name="Swarbreck D."/>
            <person name="Ashurst J.L."/>
            <person name="Taylor A."/>
            <person name="Battles J."/>
            <person name="Bird C.P."/>
            <person name="Ainscough R."/>
            <person name="Almeida J.P."/>
            <person name="Ashwell R.I.S."/>
            <person name="Ambrose K.D."/>
            <person name="Babbage A.K."/>
            <person name="Bagguley C.L."/>
            <person name="Bailey J."/>
            <person name="Banerjee R."/>
            <person name="Bates K."/>
            <person name="Beasley H."/>
            <person name="Bray-Allen S."/>
            <person name="Brown A.J."/>
            <person name="Brown J.Y."/>
            <person name="Burford D.C."/>
            <person name="Burrill W."/>
            <person name="Burton J."/>
            <person name="Cahill P."/>
            <person name="Camire D."/>
            <person name="Carter N.P."/>
            <person name="Chapman J.C."/>
            <person name="Clark S.Y."/>
            <person name="Clarke G."/>
            <person name="Clee C.M."/>
            <person name="Clegg S."/>
            <person name="Corby N."/>
            <person name="Coulson A."/>
            <person name="Dhami P."/>
            <person name="Dutta I."/>
            <person name="Dunn M."/>
            <person name="Faulkner L."/>
            <person name="Frankish A."/>
            <person name="Frankland J.A."/>
            <person name="Garner P."/>
            <person name="Garnett J."/>
            <person name="Gribble S."/>
            <person name="Griffiths C."/>
            <person name="Grocock R."/>
            <person name="Gustafson E."/>
            <person name="Hammond S."/>
            <person name="Harley J.L."/>
            <person name="Hart E."/>
            <person name="Heath P.D."/>
            <person name="Ho T.P."/>
            <person name="Hopkins B."/>
            <person name="Horne J."/>
            <person name="Howden P.J."/>
            <person name="Huckle E."/>
            <person name="Hynds C."/>
            <person name="Johnson C."/>
            <person name="Johnson D."/>
            <person name="Kana A."/>
            <person name="Kay M."/>
            <person name="Kimberley A.M."/>
            <person name="Kershaw J.K."/>
            <person name="Kokkinaki M."/>
            <person name="Laird G.K."/>
            <person name="Lawlor S."/>
            <person name="Lee H.M."/>
            <person name="Leongamornlert D.A."/>
            <person name="Laird G."/>
            <person name="Lloyd C."/>
            <person name="Lloyd D.M."/>
            <person name="Loveland J."/>
            <person name="Lovell J."/>
            <person name="McLaren S."/>
            <person name="McLay K.E."/>
            <person name="McMurray A."/>
            <person name="Mashreghi-Mohammadi M."/>
            <person name="Matthews L."/>
            <person name="Milne S."/>
            <person name="Nickerson T."/>
            <person name="Nguyen M."/>
            <person name="Overton-Larty E."/>
            <person name="Palmer S.A."/>
            <person name="Pearce A.V."/>
            <person name="Peck A.I."/>
            <person name="Pelan S."/>
            <person name="Phillimore B."/>
            <person name="Porter K."/>
            <person name="Rice C.M."/>
            <person name="Rogosin A."/>
            <person name="Ross M.T."/>
            <person name="Sarafidou T."/>
            <person name="Sehra H.K."/>
            <person name="Shownkeen R."/>
            <person name="Skuce C.D."/>
            <person name="Smith M."/>
            <person name="Standring L."/>
            <person name="Sycamore N."/>
            <person name="Tester J."/>
            <person name="Thorpe A."/>
            <person name="Torcasso W."/>
            <person name="Tracey A."/>
            <person name="Tromans A."/>
            <person name="Tsolas J."/>
            <person name="Wall M."/>
            <person name="Walsh J."/>
            <person name="Wang H."/>
            <person name="Weinstock K."/>
            <person name="West A.P."/>
            <person name="Willey D.L."/>
            <person name="Whitehead S.L."/>
            <person name="Wilming L."/>
            <person name="Wray P.W."/>
            <person name="Young L."/>
            <person name="Chen Y."/>
            <person name="Lovering R.C."/>
            <person name="Moschonas N.K."/>
            <person name="Siebert R."/>
            <person name="Fechtel K."/>
            <person name="Bentley D."/>
            <person name="Durbin R.M."/>
            <person name="Hubbard T."/>
            <person name="Doucette-Stamm L."/>
            <person name="Beck S."/>
            <person name="Smith D.R."/>
            <person name="Rogers J."/>
        </authorList>
    </citation>
    <scope>NUCLEOTIDE SEQUENCE [LARGE SCALE GENOMIC DNA]</scope>
</reference>
<reference key="4">
    <citation type="submission" date="2005-09" db="EMBL/GenBank/DDBJ databases">
        <authorList>
            <person name="Mural R.J."/>
            <person name="Istrail S."/>
            <person name="Sutton G.G."/>
            <person name="Florea L."/>
            <person name="Halpern A.L."/>
            <person name="Mobarry C.M."/>
            <person name="Lippert R."/>
            <person name="Walenz B."/>
            <person name="Shatkay H."/>
            <person name="Dew I."/>
            <person name="Miller J.R."/>
            <person name="Flanigan M.J."/>
            <person name="Edwards N.J."/>
            <person name="Bolanos R."/>
            <person name="Fasulo D."/>
            <person name="Halldorsson B.V."/>
            <person name="Hannenhalli S."/>
            <person name="Turner R."/>
            <person name="Yooseph S."/>
            <person name="Lu F."/>
            <person name="Nusskern D.R."/>
            <person name="Shue B.C."/>
            <person name="Zheng X.H."/>
            <person name="Zhong F."/>
            <person name="Delcher A.L."/>
            <person name="Huson D.H."/>
            <person name="Kravitz S.A."/>
            <person name="Mouchard L."/>
            <person name="Reinert K."/>
            <person name="Remington K.A."/>
            <person name="Clark A.G."/>
            <person name="Waterman M.S."/>
            <person name="Eichler E.E."/>
            <person name="Adams M.D."/>
            <person name="Hunkapiller M.W."/>
            <person name="Myers E.W."/>
            <person name="Venter J.C."/>
        </authorList>
    </citation>
    <scope>NUCLEOTIDE SEQUENCE [LARGE SCALE GENOMIC DNA]</scope>
</reference>
<reference key="5">
    <citation type="journal article" date="2004" name="Genome Res.">
        <title>The status, quality, and expansion of the NIH full-length cDNA project: the Mammalian Gene Collection (MGC).</title>
        <authorList>
            <consortium name="The MGC Project Team"/>
        </authorList>
    </citation>
    <scope>NUCLEOTIDE SEQUENCE [LARGE SCALE MRNA]</scope>
    <source>
        <tissue>Skin</tissue>
    </source>
</reference>
<reference key="6">
    <citation type="journal article" date="2007" name="BMC Genomics">
        <title>The full-ORF clone resource of the German cDNA consortium.</title>
        <authorList>
            <person name="Bechtel S."/>
            <person name="Rosenfelder H."/>
            <person name="Duda A."/>
            <person name="Schmidt C.P."/>
            <person name="Ernst U."/>
            <person name="Wellenreuther R."/>
            <person name="Mehrle A."/>
            <person name="Schuster C."/>
            <person name="Bahr A."/>
            <person name="Bloecker H."/>
            <person name="Heubner D."/>
            <person name="Hoerlein A."/>
            <person name="Michel G."/>
            <person name="Wedler H."/>
            <person name="Koehrer K."/>
            <person name="Ottenwaelder B."/>
            <person name="Poustka A."/>
            <person name="Wiemann S."/>
            <person name="Schupp I."/>
        </authorList>
    </citation>
    <scope>NUCLEOTIDE SEQUENCE [LARGE SCALE MRNA] OF 222-479</scope>
    <source>
        <tissue>Amygdala</tissue>
    </source>
</reference>
<reference key="7">
    <citation type="journal article" date="2002" name="J. Biol. Chem.">
        <title>Type II phosphatidylinositol 4-kinase beta is a cytosolic and peripheral membrane protein that is recruited to the plasma membrane and activated by Rac-GTP.</title>
        <authorList>
            <person name="Wei Y.J."/>
            <person name="Sun H.Q."/>
            <person name="Yamamoto M."/>
            <person name="Wlodarski P."/>
            <person name="Kunii K."/>
            <person name="Martinez M."/>
            <person name="Barylko B."/>
            <person name="Albanesi J.P."/>
            <person name="Yin H.L."/>
        </authorList>
    </citation>
    <scope>CATALYTIC ACTIVITY</scope>
    <scope>ACTIVITY REGULATION</scope>
    <scope>SUBCELLULAR LOCATION</scope>
    <scope>TOPOLOGY</scope>
    <source>
        <tissue>Brain</tissue>
    </source>
</reference>
<reference key="8">
    <citation type="journal article" date="2006" name="Cell">
        <title>Global, in vivo, and site-specific phosphorylation dynamics in signaling networks.</title>
        <authorList>
            <person name="Olsen J.V."/>
            <person name="Blagoev B."/>
            <person name="Gnad F."/>
            <person name="Macek B."/>
            <person name="Kumar C."/>
            <person name="Mortensen P."/>
            <person name="Mann M."/>
        </authorList>
    </citation>
    <scope>PHOSPHORYLATION [LARGE SCALE ANALYSIS] AT SER-47 AND SER-51</scope>
    <scope>IDENTIFICATION BY MASS SPECTROMETRY [LARGE SCALE ANALYSIS]</scope>
    <source>
        <tissue>Cervix carcinoma</tissue>
    </source>
</reference>
<reference key="9">
    <citation type="journal article" date="2006" name="J. Cell Sci.">
        <title>Phosphatidylinositol 4-kinase is required for endosomal trafficking and degradation of the EGF receptor.</title>
        <authorList>
            <person name="Minogue S."/>
            <person name="Waugh M.G."/>
            <person name="De Matteis M.A."/>
            <person name="Stephens D.J."/>
            <person name="Berditchevski F."/>
            <person name="Hsuan J.J."/>
        </authorList>
    </citation>
    <scope>FUNCTION</scope>
    <scope>SUBCELLULAR LOCATION</scope>
</reference>
<reference key="10">
    <citation type="journal article" date="2008" name="Proc. Natl. Acad. Sci. U.S.A.">
        <title>A quantitative atlas of mitotic phosphorylation.</title>
        <authorList>
            <person name="Dephoure N."/>
            <person name="Zhou C."/>
            <person name="Villen J."/>
            <person name="Beausoleil S.A."/>
            <person name="Bakalarski C.E."/>
            <person name="Elledge S.J."/>
            <person name="Gygi S.P."/>
        </authorList>
    </citation>
    <scope>IDENTIFICATION BY MASS SPECTROMETRY [LARGE SCALE ANALYSIS]</scope>
    <source>
        <tissue>Cervix carcinoma</tissue>
    </source>
</reference>
<reference key="11">
    <citation type="journal article" date="2009" name="Mol. Cell. Proteomics">
        <title>Large-scale proteomics analysis of the human kinome.</title>
        <authorList>
            <person name="Oppermann F.S."/>
            <person name="Gnad F."/>
            <person name="Olsen J.V."/>
            <person name="Hornberger R."/>
            <person name="Greff Z."/>
            <person name="Keri G."/>
            <person name="Mann M."/>
            <person name="Daub H."/>
        </authorList>
    </citation>
    <scope>PHOSPHORYLATION [LARGE SCALE ANALYSIS] AT SER-47 AND SER-51</scope>
    <scope>IDENTIFICATION BY MASS SPECTROMETRY [LARGE SCALE ANALYSIS]</scope>
</reference>
<reference key="12">
    <citation type="journal article" date="2009" name="Sci. Signal.">
        <title>Quantitative phosphoproteomic analysis of T cell receptor signaling reveals system-wide modulation of protein-protein interactions.</title>
        <authorList>
            <person name="Mayya V."/>
            <person name="Lundgren D.H."/>
            <person name="Hwang S.-I."/>
            <person name="Rezaul K."/>
            <person name="Wu L."/>
            <person name="Eng J.K."/>
            <person name="Rodionov V."/>
            <person name="Han D.K."/>
        </authorList>
    </citation>
    <scope>PHOSPHORYLATION [LARGE SCALE ANALYSIS] AT SER-47 AND SER-51</scope>
    <scope>IDENTIFICATION BY MASS SPECTROMETRY [LARGE SCALE ANALYSIS]</scope>
    <source>
        <tissue>Leukemic T-cell</tissue>
    </source>
</reference>
<reference key="13">
    <citation type="journal article" date="2010" name="J. Lipid Res.">
        <title>Relationship between phosphatidylinositol 4-phosphate synthesis, membrane organization, and lateral diffusion of PI4KIIalpha at the trans-Golgi network.</title>
        <authorList>
            <person name="Minogue S."/>
            <person name="Chu K.M."/>
            <person name="Westover E.J."/>
            <person name="Covey D.F."/>
            <person name="Hsuan J.J."/>
            <person name="Waugh M.G."/>
        </authorList>
    </citation>
    <scope>FUNCTION</scope>
    <scope>CATALYTIC ACTIVITY</scope>
    <scope>SUBCELLULAR LOCATION</scope>
</reference>
<reference key="14">
    <citation type="journal article" date="2010" name="Sci. Signal.">
        <title>Quantitative phosphoproteomics reveals widespread full phosphorylation site occupancy during mitosis.</title>
        <authorList>
            <person name="Olsen J.V."/>
            <person name="Vermeulen M."/>
            <person name="Santamaria A."/>
            <person name="Kumar C."/>
            <person name="Miller M.L."/>
            <person name="Jensen L.J."/>
            <person name="Gnad F."/>
            <person name="Cox J."/>
            <person name="Jensen T.S."/>
            <person name="Nigg E.A."/>
            <person name="Brunak S."/>
            <person name="Mann M."/>
        </authorList>
    </citation>
    <scope>ACETYLATION [LARGE SCALE ANALYSIS] AT MET-1</scope>
    <scope>PHOSPHORYLATION [LARGE SCALE ANALYSIS] AT SER-5; SER-9 AND SER-47</scope>
    <scope>IDENTIFICATION BY MASS SPECTROMETRY [LARGE SCALE ANALYSIS]</scope>
    <source>
        <tissue>Cervix carcinoma</tissue>
    </source>
</reference>
<reference key="15">
    <citation type="journal article" date="2011" name="Mol. Biol. Cell">
        <title>The schizophrenia susceptibility factor dysbindin and its associated complex sort cargoes from cell bodies to the synapse.</title>
        <authorList>
            <person name="Larimore J."/>
            <person name="Tornieri K."/>
            <person name="Ryder P.V."/>
            <person name="Gokhale A."/>
            <person name="Zlatic S.A."/>
            <person name="Craige B."/>
            <person name="Lee J.D."/>
            <person name="Talbot K."/>
            <person name="Pare J.F."/>
            <person name="Smith Y."/>
            <person name="Faundez V."/>
        </authorList>
    </citation>
    <scope>INTERACTION WITH BLOC1S5 AND DTNBP1</scope>
</reference>
<reference key="16">
    <citation type="journal article" date="2011" name="Sci. Signal.">
        <title>System-wide temporal characterization of the proteome and phosphoproteome of human embryonic stem cell differentiation.</title>
        <authorList>
            <person name="Rigbolt K.T."/>
            <person name="Prokhorova T.A."/>
            <person name="Akimov V."/>
            <person name="Henningsen J."/>
            <person name="Johansen P.T."/>
            <person name="Kratchmarova I."/>
            <person name="Kassem M."/>
            <person name="Mann M."/>
            <person name="Olsen J.V."/>
            <person name="Blagoev B."/>
        </authorList>
    </citation>
    <scope>PHOSPHORYLATION [LARGE SCALE ANALYSIS] AT SER-47 AND SER-51</scope>
    <scope>IDENTIFICATION BY MASS SPECTROMETRY [LARGE SCALE ANALYSIS]</scope>
</reference>
<reference key="17">
    <citation type="journal article" date="2012" name="EMBO Rep.">
        <title>Phosphatidylinositol 4-kinase IIalpha function at endosomes is regulated by the ubiquitin ligase Itch.</title>
        <authorList>
            <person name="Mossinger J."/>
            <person name="Wieffer M."/>
            <person name="Krause E."/>
            <person name="Freund C."/>
            <person name="Gerth F."/>
            <person name="Krauss M."/>
            <person name="Haucke V."/>
        </authorList>
    </citation>
    <scope>SUBCELLULAR LOCATION</scope>
    <scope>INTERACTION WITH ITCH</scope>
    <scope>UBIQUITINATION</scope>
    <scope>FUNCTION</scope>
</reference>
<reference key="18">
    <citation type="journal article" date="2012" name="J. Biol. Chem.">
        <title>Phosphatidylinositol 4-kinase IIalpha is palmitoylated by Golgi-localized palmitoyltransferases in cholesterol-dependent manner.</title>
        <authorList>
            <person name="Lu D."/>
            <person name="Sun H.Q."/>
            <person name="Wang H."/>
            <person name="Barylko B."/>
            <person name="Fukata Y."/>
            <person name="Fukata M."/>
            <person name="Albanesi J.P."/>
            <person name="Yin H.L."/>
        </authorList>
    </citation>
    <scope>SUBCELLULAR LOCATION</scope>
    <scope>PALMITOYLATION AT CYS-174; CYS-175; CYS-177 AND CYS-178</scope>
    <scope>MUTAGENESIS OF 174-CYS--CYS-178</scope>
</reference>
<reference key="19">
    <citation type="journal article" date="2012" name="Proc. Natl. Acad. Sci. U.S.A.">
        <title>N-terminal acetylome analyses and functional insights of the N-terminal acetyltransferase NatB.</title>
        <authorList>
            <person name="Van Damme P."/>
            <person name="Lasa M."/>
            <person name="Polevoda B."/>
            <person name="Gazquez C."/>
            <person name="Elosegui-Artola A."/>
            <person name="Kim D.S."/>
            <person name="De Juan-Pardo E."/>
            <person name="Demeyer K."/>
            <person name="Hole K."/>
            <person name="Larrea E."/>
            <person name="Timmerman E."/>
            <person name="Prieto J."/>
            <person name="Arnesen T."/>
            <person name="Sherman F."/>
            <person name="Gevaert K."/>
            <person name="Aldabe R."/>
        </authorList>
    </citation>
    <scope>ACETYLATION [LARGE SCALE ANALYSIS] AT MET-1</scope>
    <scope>IDENTIFICATION BY MASS SPECTROMETRY [LARGE SCALE ANALYSIS]</scope>
</reference>
<reference key="20">
    <citation type="journal article" date="2013" name="J. Proteome Res.">
        <title>Toward a comprehensive characterization of a human cancer cell phosphoproteome.</title>
        <authorList>
            <person name="Zhou H."/>
            <person name="Di Palma S."/>
            <person name="Preisinger C."/>
            <person name="Peng M."/>
            <person name="Polat A.N."/>
            <person name="Heck A.J."/>
            <person name="Mohammed S."/>
        </authorList>
    </citation>
    <scope>PHOSPHORYLATION [LARGE SCALE ANALYSIS] AT SER-5; SER-9; SER-47 AND SER-51</scope>
    <scope>IDENTIFICATION BY MASS SPECTROMETRY [LARGE SCALE ANALYSIS]</scope>
    <source>
        <tissue>Cervix carcinoma</tissue>
        <tissue>Erythroleukemia</tissue>
    </source>
</reference>
<reference key="21">
    <citation type="journal article" date="2014" name="J. Proteomics">
        <title>An enzyme assisted RP-RPLC approach for in-depth analysis of human liver phosphoproteome.</title>
        <authorList>
            <person name="Bian Y."/>
            <person name="Song C."/>
            <person name="Cheng K."/>
            <person name="Dong M."/>
            <person name="Wang F."/>
            <person name="Huang J."/>
            <person name="Sun D."/>
            <person name="Wang L."/>
            <person name="Ye M."/>
            <person name="Zou H."/>
        </authorList>
    </citation>
    <scope>PHOSPHORYLATION [LARGE SCALE ANALYSIS] AT SER-44; SER-47 AND SER-51</scope>
    <scope>IDENTIFICATION BY MASS SPECTROMETRY [LARGE SCALE ANALYSIS]</scope>
    <source>
        <tissue>Liver</tissue>
    </source>
</reference>
<reference key="22">
    <citation type="journal article" date="2015" name="Proteomics">
        <title>N-terminome analysis of the human mitochondrial proteome.</title>
        <authorList>
            <person name="Vaca Jacome A.S."/>
            <person name="Rabilloud T."/>
            <person name="Schaeffer-Reiss C."/>
            <person name="Rompais M."/>
            <person name="Ayoub D."/>
            <person name="Lane L."/>
            <person name="Bairoch A."/>
            <person name="Van Dorsselaer A."/>
            <person name="Carapito C."/>
        </authorList>
    </citation>
    <scope>ACETYLATION [LARGE SCALE ANALYSIS] AT MET-1</scope>
    <scope>IDENTIFICATION BY MASS SPECTROMETRY [LARGE SCALE ANALYSIS]</scope>
</reference>
<reference key="23">
    <citation type="journal article" date="2019" name="J. Cell Biol.">
        <title>ATG9A shapes the forming autophagosome through Arfaptin 2 and phosphatidylinositol 4-kinase IIIbeta.</title>
        <authorList>
            <person name="Judith D."/>
            <person name="Jefferies H.B.J."/>
            <person name="Boeing S."/>
            <person name="Frith D."/>
            <person name="Snijders A.P."/>
            <person name="Tooze S.A."/>
        </authorList>
    </citation>
    <scope>INTERACTION WITH ATG9A</scope>
</reference>
<reference key="24">
    <citation type="journal article" date="2014" name="EMBO Rep.">
        <title>The crystal structure of the phosphatidylinositol 4-kinase IIalpha.</title>
        <authorList>
            <person name="Baumlova A."/>
            <person name="Chalupska D."/>
            <person name="Rozycki B."/>
            <person name="Jovic M."/>
            <person name="Wisniewski E."/>
            <person name="Klima M."/>
            <person name="Dubankova A."/>
            <person name="Kloer D.P."/>
            <person name="Nencka R."/>
            <person name="Balla T."/>
            <person name="Boura E."/>
        </authorList>
    </citation>
    <scope>X-RAY CRYSTALLOGRAPHY (2.77 ANGSTROMS) OF 76-172 AND 180-468 IN COMPLEX WITH ATP</scope>
    <scope>FUNCTION</scope>
    <scope>CATALYTIC ACTIVITY</scope>
    <scope>MUTAGENESIS OF LYS-152; ASN-163; 165-LYS--LYS-172; ARG-275; ASP-308 AND GLN-445</scope>
</reference>
<reference key="25">
    <citation type="journal article" date="2014" name="Nat. Commun.">
        <title>Molecular insights into the membrane-associated phosphatidylinositol 4-kinase IIalpha.</title>
        <authorList>
            <person name="Zhou Q."/>
            <person name="Li J."/>
            <person name="Yu H."/>
            <person name="Zhai Y."/>
            <person name="Gao Z."/>
            <person name="Liu Y."/>
            <person name="Pang X."/>
            <person name="Zhang L."/>
            <person name="Schulten K."/>
            <person name="Sun F."/>
            <person name="Chen C."/>
        </authorList>
    </citation>
    <scope>X-RAY CRYSTALLOGRAPHY (2.95 ANGSTROMS) OF 78-453 IN COMPLEX WITH ADP</scope>
    <scope>FUNCTION</scope>
    <scope>CATALYTIC ACTIVITY</scope>
    <scope>SUBCELLULAR LOCATION</scope>
    <scope>MUTAGENESIS OF ARG-129; LYS-152; 157-GLU--TYR-159; LYS-165; TRP-166; LYS-168; LYS-172; 174-CYS--CYS-178; LEU-184; PHE-263; ASP-269; ARG-275; ARG-276; ILE-345; LEU-349; TRP-359; TYR-365 AND TRP-368</scope>
</reference>
<reference key="26">
    <citation type="journal article" date="2018" name="Ann. Clin. Transl. Neurol.">
        <title>PI4K2A deficiency in an intellectual disability, epilepsy, myoclonus, akathisia syndrome.</title>
        <authorList>
            <person name="Alkhater R.A."/>
            <person name="Scherer S.W."/>
            <person name="Minassian B.A."/>
            <person name="Walker S."/>
        </authorList>
    </citation>
    <scope>VARIANT NEDMSB 22-SER--TRP-479 DEL</scope>
    <scope>INVOLVEMENT IN NEDMSB</scope>
</reference>
<reference key="27">
    <citation type="journal article" date="2020" name="J. Inherit. Metab. Dis.">
        <title>Novel defect in phosphatidylinositol 4-kinase type 2-alpha (PI4K2A) at the membrane-enzyme interface is associated with metabolic cutis laxa.</title>
        <authorList>
            <person name="Mohamed M."/>
            <person name="Gardeitchik T."/>
            <person name="Balasubramaniam S."/>
            <person name="Guerrero-Castillo S."/>
            <person name="Dalloyaux D."/>
            <person name="van Kraaij S."/>
            <person name="Venselaar H."/>
            <person name="Hoischen A."/>
            <person name="Urban Z."/>
            <person name="Brandt U."/>
            <person name="Al-Shawi R."/>
            <person name="Simons J.P."/>
            <person name="Frison M."/>
            <person name="Ngu L.H."/>
            <person name="Callewaert B."/>
            <person name="Spelbrink H."/>
            <person name="Kallemeijn W.W."/>
            <person name="Aerts J.M.F.G."/>
            <person name="Waugh M.G."/>
            <person name="Morava E."/>
            <person name="Wevers R.A."/>
        </authorList>
    </citation>
    <scope>VARIANT TRP-275</scope>
    <scope>CHARACTERIZATION OF VARIANT TRP-275</scope>
</reference>
<reference key="28">
    <citation type="journal article" date="2022" name="Ann. Clin. Transl. Neurol.">
        <title>PI4K2A deficiency causes innate error in intracellular trafficking with developmental and epileptic-dyskinetic encephalopathy.</title>
        <authorList>
            <person name="Dafsari H.S."/>
            <person name="Pemberton J.G."/>
            <person name="Ferrer E.A."/>
            <person name="Yammine T."/>
            <person name="Farra C."/>
            <person name="Mohammadi M.H."/>
            <person name="Ghayoor Karimiani E."/>
            <person name="Hashemi N."/>
            <person name="Souaid M."/>
            <person name="Sabbagh S."/>
            <person name="Najarzadeh Torbati P."/>
            <person name="Khan S."/>
            <person name="Roze E."/>
            <person name="Moreno-De-Luca A."/>
            <person name="Bertoli-Avella A.M."/>
            <person name="Houlden H."/>
            <person name="Balla T."/>
            <person name="Maroofian R."/>
        </authorList>
    </citation>
    <scope>VARIANT NEDMSB 309-ARG--TRP-479 DEL</scope>
    <scope>INVOLVEMENT IN NEDMSB</scope>
    <scope>SUBCELLULAR LOCATION</scope>
    <scope>CHARACTERIZATION OF VARIANT NEDMSB 309-ARG--TRP-479 DEL</scope>
    <scope>CHARACTERIZATION OF VARIANT TRP-275</scope>
</reference>
<name>P4K2A_HUMAN</name>
<protein>
    <recommendedName>
        <fullName>Phosphatidylinositol 4-kinase type 2-alpha</fullName>
        <ecNumber evidence="5 6 8 12 13">2.7.1.67</ecNumber>
    </recommendedName>
    <alternativeName>
        <fullName>Phosphatidylinositol 4-kinase type II-alpha</fullName>
    </alternativeName>
</protein>
<dbReference type="EC" id="2.7.1.67" evidence="5 6 8 12 13"/>
<dbReference type="EMBL" id="AJ303098">
    <property type="protein sequence ID" value="CAC38065.1"/>
    <property type="molecule type" value="mRNA"/>
</dbReference>
<dbReference type="EMBL" id="BT007330">
    <property type="protein sequence ID" value="AAP35994.1"/>
    <property type="molecule type" value="mRNA"/>
</dbReference>
<dbReference type="EMBL" id="AL355315">
    <property type="status" value="NOT_ANNOTATED_CDS"/>
    <property type="molecule type" value="Genomic_DNA"/>
</dbReference>
<dbReference type="EMBL" id="CH471066">
    <property type="protein sequence ID" value="EAW49906.1"/>
    <property type="molecule type" value="Genomic_DNA"/>
</dbReference>
<dbReference type="EMBL" id="CH471066">
    <property type="protein sequence ID" value="EAW49907.1"/>
    <property type="molecule type" value="Genomic_DNA"/>
</dbReference>
<dbReference type="EMBL" id="BC003167">
    <property type="protein sequence ID" value="AAH03167.1"/>
    <property type="molecule type" value="mRNA"/>
</dbReference>
<dbReference type="EMBL" id="AL353952">
    <property type="protein sequence ID" value="CAB89254.1"/>
    <property type="molecule type" value="mRNA"/>
</dbReference>
<dbReference type="CCDS" id="CCDS7469.1"/>
<dbReference type="PIR" id="T48687">
    <property type="entry name" value="T48687"/>
</dbReference>
<dbReference type="RefSeq" id="NP_060895.1">
    <property type="nucleotide sequence ID" value="NM_018425.4"/>
</dbReference>
<dbReference type="PDB" id="4HND">
    <property type="method" value="X-ray"/>
    <property type="resolution" value="3.20 A"/>
    <property type="chains" value="A/B=78-453"/>
</dbReference>
<dbReference type="PDB" id="4HNE">
    <property type="method" value="X-ray"/>
    <property type="resolution" value="2.95 A"/>
    <property type="chains" value="A/B=78-453"/>
</dbReference>
<dbReference type="PDB" id="4PLA">
    <property type="method" value="X-ray"/>
    <property type="resolution" value="2.77 A"/>
    <property type="chains" value="A=180-468"/>
</dbReference>
<dbReference type="PDB" id="4YC4">
    <property type="method" value="X-ray"/>
    <property type="resolution" value="2.58 A"/>
    <property type="chains" value="A=180-468"/>
</dbReference>
<dbReference type="PDB" id="5EUT">
    <property type="method" value="X-ray"/>
    <property type="resolution" value="2.80 A"/>
    <property type="chains" value="A=179-468"/>
</dbReference>
<dbReference type="PDB" id="5I0N">
    <property type="method" value="X-ray"/>
    <property type="resolution" value="2.28 A"/>
    <property type="chains" value="A=180-468"/>
</dbReference>
<dbReference type="PDBsum" id="4HND"/>
<dbReference type="PDBsum" id="4HNE"/>
<dbReference type="PDBsum" id="4PLA"/>
<dbReference type="PDBsum" id="4YC4"/>
<dbReference type="PDBsum" id="5EUT"/>
<dbReference type="PDBsum" id="5I0N"/>
<dbReference type="SMR" id="Q9BTU6"/>
<dbReference type="BioGRID" id="120639">
    <property type="interactions" value="82"/>
</dbReference>
<dbReference type="CORUM" id="Q9BTU6"/>
<dbReference type="FunCoup" id="Q9BTU6">
    <property type="interactions" value="2150"/>
</dbReference>
<dbReference type="IntAct" id="Q9BTU6">
    <property type="interactions" value="48"/>
</dbReference>
<dbReference type="MINT" id="Q9BTU6"/>
<dbReference type="STRING" id="9606.ENSP00000359665"/>
<dbReference type="BindingDB" id="Q9BTU6"/>
<dbReference type="ChEMBL" id="CHEMBL2251"/>
<dbReference type="DrugCentral" id="Q9BTU6"/>
<dbReference type="GuidetoPHARMACOLOGY" id="2498"/>
<dbReference type="GlyGen" id="Q9BTU6">
    <property type="glycosylation" value="1 site, 1 O-linked glycan (1 site)"/>
</dbReference>
<dbReference type="iPTMnet" id="Q9BTU6"/>
<dbReference type="PhosphoSitePlus" id="Q9BTU6"/>
<dbReference type="SwissPalm" id="Q9BTU6"/>
<dbReference type="BioMuta" id="PI4K2A"/>
<dbReference type="DMDM" id="74752344"/>
<dbReference type="jPOST" id="Q9BTU6"/>
<dbReference type="MassIVE" id="Q9BTU6"/>
<dbReference type="PaxDb" id="9606-ENSP00000359665"/>
<dbReference type="PeptideAtlas" id="Q9BTU6"/>
<dbReference type="ProteomicsDB" id="79011"/>
<dbReference type="Pumba" id="Q9BTU6"/>
<dbReference type="Antibodypedia" id="35004">
    <property type="antibodies" value="186 antibodies from 30 providers"/>
</dbReference>
<dbReference type="DNASU" id="55361"/>
<dbReference type="Ensembl" id="ENST00000370631.4">
    <property type="protein sequence ID" value="ENSP00000359665.3"/>
    <property type="gene ID" value="ENSG00000155252.14"/>
</dbReference>
<dbReference type="GeneID" id="55361"/>
<dbReference type="KEGG" id="hsa:55361"/>
<dbReference type="MANE-Select" id="ENST00000370631.4">
    <property type="protein sequence ID" value="ENSP00000359665.3"/>
    <property type="RefSeq nucleotide sequence ID" value="NM_018425.4"/>
    <property type="RefSeq protein sequence ID" value="NP_060895.1"/>
</dbReference>
<dbReference type="UCSC" id="uc001kog.2">
    <property type="organism name" value="human"/>
</dbReference>
<dbReference type="AGR" id="HGNC:30031"/>
<dbReference type="CTD" id="55361"/>
<dbReference type="DisGeNET" id="55361"/>
<dbReference type="GeneCards" id="PI4K2A"/>
<dbReference type="HGNC" id="HGNC:30031">
    <property type="gene designation" value="PI4K2A"/>
</dbReference>
<dbReference type="HPA" id="ENSG00000155252">
    <property type="expression patterns" value="Low tissue specificity"/>
</dbReference>
<dbReference type="MalaCards" id="PI4K2A"/>
<dbReference type="MIM" id="609763">
    <property type="type" value="gene"/>
</dbReference>
<dbReference type="MIM" id="620732">
    <property type="type" value="phenotype"/>
</dbReference>
<dbReference type="neXtProt" id="NX_Q9BTU6"/>
<dbReference type="OpenTargets" id="ENSG00000155252"/>
<dbReference type="PharmGKB" id="PA162399304"/>
<dbReference type="VEuPathDB" id="HostDB:ENSG00000155252"/>
<dbReference type="eggNOG" id="KOG2381">
    <property type="taxonomic scope" value="Eukaryota"/>
</dbReference>
<dbReference type="GeneTree" id="ENSGT00390000010434"/>
<dbReference type="HOGENOM" id="CLU_032516_2_0_1"/>
<dbReference type="InParanoid" id="Q9BTU6"/>
<dbReference type="OMA" id="ATERCIF"/>
<dbReference type="OrthoDB" id="3349449at2759"/>
<dbReference type="PAN-GO" id="Q9BTU6">
    <property type="GO annotations" value="7 GO annotations based on evolutionary models"/>
</dbReference>
<dbReference type="PhylomeDB" id="Q9BTU6"/>
<dbReference type="TreeFam" id="TF314740"/>
<dbReference type="BioCyc" id="MetaCyc:HS00573-MONOMER"/>
<dbReference type="BRENDA" id="2.7.1.67">
    <property type="organism ID" value="2681"/>
</dbReference>
<dbReference type="PathwayCommons" id="Q9BTU6"/>
<dbReference type="Reactome" id="R-HSA-1660499">
    <property type="pathway name" value="Synthesis of PIPs at the plasma membrane"/>
</dbReference>
<dbReference type="Reactome" id="R-HSA-1660514">
    <property type="pathway name" value="Synthesis of PIPs at the Golgi membrane"/>
</dbReference>
<dbReference type="Reactome" id="R-HSA-1660516">
    <property type="pathway name" value="Synthesis of PIPs at the early endosome membrane"/>
</dbReference>
<dbReference type="SignaLink" id="Q9BTU6"/>
<dbReference type="SIGNOR" id="Q9BTU6"/>
<dbReference type="BioGRID-ORCS" id="55361">
    <property type="hits" value="18 hits in 1154 CRISPR screens"/>
</dbReference>
<dbReference type="ChiTaRS" id="PI4K2A">
    <property type="organism name" value="human"/>
</dbReference>
<dbReference type="EvolutionaryTrace" id="Q9BTU6"/>
<dbReference type="GeneWiki" id="PI4K2A"/>
<dbReference type="GenomeRNAi" id="55361"/>
<dbReference type="Pharos" id="Q9BTU6">
    <property type="development level" value="Tbio"/>
</dbReference>
<dbReference type="PRO" id="PR:Q9BTU6"/>
<dbReference type="Proteomes" id="UP000005640">
    <property type="component" value="Chromosome 10"/>
</dbReference>
<dbReference type="RNAct" id="Q9BTU6">
    <property type="molecule type" value="protein"/>
</dbReference>
<dbReference type="Bgee" id="ENSG00000155252">
    <property type="expression patterns" value="Expressed in lower esophagus mucosa and 186 other cell types or tissues"/>
</dbReference>
<dbReference type="GO" id="GO:0031410">
    <property type="term" value="C:cytoplasmic vesicle"/>
    <property type="evidence" value="ECO:0000250"/>
    <property type="project" value="UniProtKB"/>
</dbReference>
<dbReference type="GO" id="GO:0005829">
    <property type="term" value="C:cytosol"/>
    <property type="evidence" value="ECO:0000304"/>
    <property type="project" value="Reactome"/>
</dbReference>
<dbReference type="GO" id="GO:0030425">
    <property type="term" value="C:dendrite"/>
    <property type="evidence" value="ECO:0000250"/>
    <property type="project" value="UniProtKB"/>
</dbReference>
<dbReference type="GO" id="GO:0031901">
    <property type="term" value="C:early endosome membrane"/>
    <property type="evidence" value="ECO:0000314"/>
    <property type="project" value="UniProtKB"/>
</dbReference>
<dbReference type="GO" id="GO:0005768">
    <property type="term" value="C:endosome"/>
    <property type="evidence" value="ECO:0000250"/>
    <property type="project" value="UniProtKB"/>
</dbReference>
<dbReference type="GO" id="GO:0010008">
    <property type="term" value="C:endosome membrane"/>
    <property type="evidence" value="ECO:0000314"/>
    <property type="project" value="UniProtKB"/>
</dbReference>
<dbReference type="GO" id="GO:0098978">
    <property type="term" value="C:glutamatergic synapse"/>
    <property type="evidence" value="ECO:0007669"/>
    <property type="project" value="Ensembl"/>
</dbReference>
<dbReference type="GO" id="GO:0000139">
    <property type="term" value="C:Golgi membrane"/>
    <property type="evidence" value="ECO:0000314"/>
    <property type="project" value="UniProtKB"/>
</dbReference>
<dbReference type="GO" id="GO:0035838">
    <property type="term" value="C:growing cell tip"/>
    <property type="evidence" value="ECO:0000250"/>
    <property type="project" value="UniProtKB"/>
</dbReference>
<dbReference type="GO" id="GO:0005765">
    <property type="term" value="C:lysosomal membrane"/>
    <property type="evidence" value="ECO:0007005"/>
    <property type="project" value="UniProtKB"/>
</dbReference>
<dbReference type="GO" id="GO:0016020">
    <property type="term" value="C:membrane"/>
    <property type="evidence" value="ECO:0000314"/>
    <property type="project" value="UniProtKB"/>
</dbReference>
<dbReference type="GO" id="GO:0045121">
    <property type="term" value="C:membrane raft"/>
    <property type="evidence" value="ECO:0000314"/>
    <property type="project" value="UniProtKB"/>
</dbReference>
<dbReference type="GO" id="GO:0005739">
    <property type="term" value="C:mitochondrion"/>
    <property type="evidence" value="ECO:0000250"/>
    <property type="project" value="UniProtKB"/>
</dbReference>
<dbReference type="GO" id="GO:0043005">
    <property type="term" value="C:neuron projection"/>
    <property type="evidence" value="ECO:0000250"/>
    <property type="project" value="UniProtKB"/>
</dbReference>
<dbReference type="GO" id="GO:0043025">
    <property type="term" value="C:neuronal cell body"/>
    <property type="evidence" value="ECO:0000250"/>
    <property type="project" value="UniProtKB"/>
</dbReference>
<dbReference type="GO" id="GO:0043204">
    <property type="term" value="C:perikaryon"/>
    <property type="evidence" value="ECO:0007669"/>
    <property type="project" value="UniProtKB-SubCell"/>
</dbReference>
<dbReference type="GO" id="GO:0005886">
    <property type="term" value="C:plasma membrane"/>
    <property type="evidence" value="ECO:0000314"/>
    <property type="project" value="UniProtKB"/>
</dbReference>
<dbReference type="GO" id="GO:0048786">
    <property type="term" value="C:presynaptic active zone"/>
    <property type="evidence" value="ECO:0007669"/>
    <property type="project" value="Ensembl"/>
</dbReference>
<dbReference type="GO" id="GO:0042734">
    <property type="term" value="C:presynaptic membrane"/>
    <property type="evidence" value="ECO:0000250"/>
    <property type="project" value="UniProtKB"/>
</dbReference>
<dbReference type="GO" id="GO:0005802">
    <property type="term" value="C:trans-Golgi network"/>
    <property type="evidence" value="ECO:0000318"/>
    <property type="project" value="GO_Central"/>
</dbReference>
<dbReference type="GO" id="GO:0004430">
    <property type="term" value="F:1-phosphatidylinositol 4-kinase activity"/>
    <property type="evidence" value="ECO:0000314"/>
    <property type="project" value="UniProtKB"/>
</dbReference>
<dbReference type="GO" id="GO:0035651">
    <property type="term" value="F:AP-3 adaptor complex binding"/>
    <property type="evidence" value="ECO:0000314"/>
    <property type="project" value="UniProtKB"/>
</dbReference>
<dbReference type="GO" id="GO:0005524">
    <property type="term" value="F:ATP binding"/>
    <property type="evidence" value="ECO:0000314"/>
    <property type="project" value="UniProtKB"/>
</dbReference>
<dbReference type="GO" id="GO:0000287">
    <property type="term" value="F:magnesium ion binding"/>
    <property type="evidence" value="ECO:0000303"/>
    <property type="project" value="UniProtKB"/>
</dbReference>
<dbReference type="GO" id="GO:0007032">
    <property type="term" value="P:endosome organization"/>
    <property type="evidence" value="ECO:0000318"/>
    <property type="project" value="GO_Central"/>
</dbReference>
<dbReference type="GO" id="GO:0007030">
    <property type="term" value="P:Golgi organization"/>
    <property type="evidence" value="ECO:0000318"/>
    <property type="project" value="GO_Central"/>
</dbReference>
<dbReference type="GO" id="GO:0006661">
    <property type="term" value="P:phosphatidylinositol biosynthetic process"/>
    <property type="evidence" value="ECO:0000314"/>
    <property type="project" value="UniProtKB"/>
</dbReference>
<dbReference type="GO" id="GO:0046854">
    <property type="term" value="P:phosphatidylinositol phosphate biosynthetic process"/>
    <property type="evidence" value="ECO:0000314"/>
    <property type="project" value="UniProtKB"/>
</dbReference>
<dbReference type="InterPro" id="IPR039756">
    <property type="entry name" value="Lsb6/PI4K2"/>
</dbReference>
<dbReference type="InterPro" id="IPR000403">
    <property type="entry name" value="PI3/4_kinase_cat_dom"/>
</dbReference>
<dbReference type="PANTHER" id="PTHR12865:SF7">
    <property type="entry name" value="PHOSPHATIDYLINOSITOL 4-KINASE TYPE 2-ALPHA"/>
    <property type="match status" value="1"/>
</dbReference>
<dbReference type="PANTHER" id="PTHR12865">
    <property type="entry name" value="PHOSPHATIDYLINOSITOL 4-KINASE TYPE-II"/>
    <property type="match status" value="1"/>
</dbReference>
<dbReference type="Pfam" id="PF00454">
    <property type="entry name" value="PI3_PI4_kinase"/>
    <property type="match status" value="1"/>
</dbReference>
<dbReference type="SUPFAM" id="SSF56399">
    <property type="entry name" value="ADP-ribosylation"/>
    <property type="match status" value="1"/>
</dbReference>
<dbReference type="PROSITE" id="PS50290">
    <property type="entry name" value="PI3_4_KINASE_3"/>
    <property type="match status" value="1"/>
</dbReference>